<protein>
    <recommendedName>
        <fullName>Brevinin-1BYc</fullName>
    </recommendedName>
</protein>
<accession>P84113</accession>
<feature type="peptide" id="PRO_0000043534" description="Brevinin-1BYc">
    <location>
        <begin position="1"/>
        <end position="24"/>
    </location>
</feature>
<feature type="disulfide bond" evidence="1">
    <location>
        <begin position="18"/>
        <end position="24"/>
    </location>
</feature>
<reference evidence="2" key="1">
    <citation type="journal article" date="2003" name="J. Pept. Res.">
        <title>Isolation of peptides of the brevinin-1 family with potent candidacidal activity from the skin secretions of the frog Rana boylii.</title>
        <authorList>
            <person name="Conlon J.M."/>
            <person name="Sonnevend A."/>
            <person name="Patel M."/>
            <person name="Davidson C."/>
            <person name="Nielsen P.F."/>
            <person name="Pal T."/>
            <person name="Rollins-Smith L.A."/>
        </authorList>
    </citation>
    <scope>PROTEIN SEQUENCE</scope>
    <scope>FUNCTION</scope>
    <scope>MASS SPECTROMETRY</scope>
    <source>
        <tissue evidence="1">Skin secretion</tissue>
    </source>
</reference>
<keyword id="KW-0878">Amphibian defense peptide</keyword>
<keyword id="KW-0044">Antibiotic</keyword>
<keyword id="KW-0929">Antimicrobial</keyword>
<keyword id="KW-0204">Cytolysis</keyword>
<keyword id="KW-0903">Direct protein sequencing</keyword>
<keyword id="KW-1015">Disulfide bond</keyword>
<keyword id="KW-0295">Fungicide</keyword>
<keyword id="KW-0354">Hemolysis</keyword>
<keyword id="KW-0964">Secreted</keyword>
<evidence type="ECO:0000269" key="1">
    <source>
    </source>
</evidence>
<evidence type="ECO:0000305" key="2"/>
<dbReference type="GO" id="GO:0005576">
    <property type="term" value="C:extracellular region"/>
    <property type="evidence" value="ECO:0007669"/>
    <property type="project" value="UniProtKB-SubCell"/>
</dbReference>
<dbReference type="GO" id="GO:0042742">
    <property type="term" value="P:defense response to bacterium"/>
    <property type="evidence" value="ECO:0007669"/>
    <property type="project" value="UniProtKB-KW"/>
</dbReference>
<dbReference type="GO" id="GO:0050832">
    <property type="term" value="P:defense response to fungus"/>
    <property type="evidence" value="ECO:0007669"/>
    <property type="project" value="UniProtKB-KW"/>
</dbReference>
<dbReference type="GO" id="GO:0031640">
    <property type="term" value="P:killing of cells of another organism"/>
    <property type="evidence" value="ECO:0007669"/>
    <property type="project" value="UniProtKB-KW"/>
</dbReference>
<dbReference type="InterPro" id="IPR012520">
    <property type="entry name" value="Antimicrobial_frog_1"/>
</dbReference>
<dbReference type="Pfam" id="PF08018">
    <property type="entry name" value="Antimicrobial_1"/>
    <property type="match status" value="1"/>
</dbReference>
<name>BR1C_RANBO</name>
<organism>
    <name type="scientific">Rana boylii</name>
    <name type="common">Foothill yellow-legged frog</name>
    <dbReference type="NCBI Taxonomy" id="160499"/>
    <lineage>
        <taxon>Eukaryota</taxon>
        <taxon>Metazoa</taxon>
        <taxon>Chordata</taxon>
        <taxon>Craniata</taxon>
        <taxon>Vertebrata</taxon>
        <taxon>Euteleostomi</taxon>
        <taxon>Amphibia</taxon>
        <taxon>Batrachia</taxon>
        <taxon>Anura</taxon>
        <taxon>Neobatrachia</taxon>
        <taxon>Ranoidea</taxon>
        <taxon>Ranidae</taxon>
        <taxon>Rana</taxon>
        <taxon>Rana</taxon>
    </lineage>
</organism>
<proteinExistence type="evidence at protein level"/>
<sequence>FLPILASLAATLGPKLLCLITKKC</sequence>
<comment type="function">
    <text evidence="1">Antibacterial activity against Gram-positive bacterium S.aureus. Weak antifungal activity against C.albicans.</text>
</comment>
<comment type="subcellular location">
    <subcellularLocation>
        <location evidence="1">Secreted</location>
    </subcellularLocation>
</comment>
<comment type="tissue specificity">
    <text>Expressed by the skin glands.</text>
</comment>
<comment type="mass spectrometry"/>
<comment type="similarity">
    <text evidence="1">Belongs to the frog skin active peptide (FSAP) family. Brevinin subfamily.</text>
</comment>